<sequence length="354" mass="39695">MPHRSLRATVVLLLVILKKQPSSSAPLNGSKWTYVGPAGEKNWSKKYPSCGGLLQSPIDLHSDILQYDASLAPLQFQGYNVSVEKLLNLTNDGHSVRLNLNSDMYIQGLQPHHYRAEQLHLHWGNRNDPHGSEHTVSGKHFAAELHIVHYNSDLYPDFSTASDKSEGLAVLAVLIEIGSANPSYDKIFSHLQHVKYKGQQVLIPGFNIEELLPESPGEYYRYEGSLTTPPCYPTVLWTVFRNPVQISQEQLLALETALYFTHMDDPTPREMINNFRQVQKFDERLVYISFRQGLLTDTGLSLGIILSVALAGVLGISIVLAVSIWLFKRKKSKKGDNKGVIYKPAIKKEAEVHA</sequence>
<dbReference type="EC" id="4.2.1.1" evidence="1"/>
<dbReference type="EMBL" id="AK052639">
    <property type="protein sequence ID" value="BAC35074.1"/>
    <property type="molecule type" value="mRNA"/>
</dbReference>
<dbReference type="EMBL" id="BC035941">
    <property type="protein sequence ID" value="AAH35941.1"/>
    <property type="molecule type" value="mRNA"/>
</dbReference>
<dbReference type="CCDS" id="CCDS23306.1"/>
<dbReference type="RefSeq" id="NP_001293077.1">
    <property type="nucleotide sequence ID" value="NM_001306148.1"/>
</dbReference>
<dbReference type="RefSeq" id="NP_848483.3">
    <property type="nucleotide sequence ID" value="NM_178396.5"/>
</dbReference>
<dbReference type="SMR" id="Q8CI85"/>
<dbReference type="FunCoup" id="Q8CI85">
    <property type="interactions" value="154"/>
</dbReference>
<dbReference type="STRING" id="10090.ENSMUSP00000071786"/>
<dbReference type="GlyCosmos" id="Q8CI85">
    <property type="glycosylation" value="4 sites, No reported glycans"/>
</dbReference>
<dbReference type="GlyGen" id="Q8CI85">
    <property type="glycosylation" value="4 sites, 1 N-linked glycan (1 site)"/>
</dbReference>
<dbReference type="iPTMnet" id="Q8CI85"/>
<dbReference type="PhosphoSitePlus" id="Q8CI85"/>
<dbReference type="jPOST" id="Q8CI85"/>
<dbReference type="PaxDb" id="10090-ENSMUSP00000071786"/>
<dbReference type="ProteomicsDB" id="273897"/>
<dbReference type="DNASU" id="76459"/>
<dbReference type="GeneID" id="76459"/>
<dbReference type="KEGG" id="mmu:76459"/>
<dbReference type="UCSC" id="uc009qfc.2">
    <property type="organism name" value="mouse"/>
</dbReference>
<dbReference type="AGR" id="MGI:1923709"/>
<dbReference type="CTD" id="76459"/>
<dbReference type="MGI" id="MGI:1923709">
    <property type="gene designation" value="Car12"/>
</dbReference>
<dbReference type="eggNOG" id="KOG0382">
    <property type="taxonomic scope" value="Eukaryota"/>
</dbReference>
<dbReference type="InParanoid" id="Q8CI85"/>
<dbReference type="OrthoDB" id="429145at2759"/>
<dbReference type="PhylomeDB" id="Q8CI85"/>
<dbReference type="TreeFam" id="TF316425"/>
<dbReference type="Reactome" id="R-MMU-1475029">
    <property type="pathway name" value="Reversible hydration of carbon dioxide"/>
</dbReference>
<dbReference type="BioGRID-ORCS" id="76459">
    <property type="hits" value="0 hits in 79 CRISPR screens"/>
</dbReference>
<dbReference type="PRO" id="PR:Q8CI85"/>
<dbReference type="Proteomes" id="UP000000589">
    <property type="component" value="Unplaced"/>
</dbReference>
<dbReference type="RNAct" id="Q8CI85">
    <property type="molecule type" value="protein"/>
</dbReference>
<dbReference type="GO" id="GO:0005886">
    <property type="term" value="C:plasma membrane"/>
    <property type="evidence" value="ECO:0007669"/>
    <property type="project" value="UniProtKB-SubCell"/>
</dbReference>
<dbReference type="GO" id="GO:0004089">
    <property type="term" value="F:carbonate dehydratase activity"/>
    <property type="evidence" value="ECO:0000314"/>
    <property type="project" value="MGI"/>
</dbReference>
<dbReference type="GO" id="GO:0008270">
    <property type="term" value="F:zinc ion binding"/>
    <property type="evidence" value="ECO:0007669"/>
    <property type="project" value="InterPro"/>
</dbReference>
<dbReference type="GO" id="GO:0015670">
    <property type="term" value="P:carbon dioxide transport"/>
    <property type="evidence" value="ECO:0000305"/>
    <property type="project" value="MGI"/>
</dbReference>
<dbReference type="GO" id="GO:0006885">
    <property type="term" value="P:regulation of pH"/>
    <property type="evidence" value="ECO:0000305"/>
    <property type="project" value="MGI"/>
</dbReference>
<dbReference type="FunFam" id="3.10.200.10:FF:000003">
    <property type="entry name" value="Carbonic anhydrase 12"/>
    <property type="match status" value="1"/>
</dbReference>
<dbReference type="Gene3D" id="3.10.200.10">
    <property type="entry name" value="Alpha carbonic anhydrase"/>
    <property type="match status" value="1"/>
</dbReference>
<dbReference type="InterPro" id="IPR001148">
    <property type="entry name" value="CA_dom"/>
</dbReference>
<dbReference type="InterPro" id="IPR036398">
    <property type="entry name" value="CA_dom_sf"/>
</dbReference>
<dbReference type="InterPro" id="IPR023561">
    <property type="entry name" value="Carbonic_anhydrase_a-class"/>
</dbReference>
<dbReference type="InterPro" id="IPR018338">
    <property type="entry name" value="Carbonic_anhydrase_a-class_CS"/>
</dbReference>
<dbReference type="PANTHER" id="PTHR18952">
    <property type="entry name" value="CARBONIC ANHYDRASE"/>
    <property type="match status" value="1"/>
</dbReference>
<dbReference type="PANTHER" id="PTHR18952:SF19">
    <property type="entry name" value="CARBONIC ANHYDRASE 12"/>
    <property type="match status" value="1"/>
</dbReference>
<dbReference type="Pfam" id="PF00194">
    <property type="entry name" value="Carb_anhydrase"/>
    <property type="match status" value="1"/>
</dbReference>
<dbReference type="SMART" id="SM01057">
    <property type="entry name" value="Carb_anhydrase"/>
    <property type="match status" value="1"/>
</dbReference>
<dbReference type="SUPFAM" id="SSF51069">
    <property type="entry name" value="Carbonic anhydrase"/>
    <property type="match status" value="1"/>
</dbReference>
<dbReference type="PROSITE" id="PS00162">
    <property type="entry name" value="ALPHA_CA_1"/>
    <property type="match status" value="1"/>
</dbReference>
<dbReference type="PROSITE" id="PS51144">
    <property type="entry name" value="ALPHA_CA_2"/>
    <property type="match status" value="1"/>
</dbReference>
<accession>Q8CI85</accession>
<accession>Q8BKG6</accession>
<reference key="1">
    <citation type="journal article" date="2005" name="Science">
        <title>The transcriptional landscape of the mammalian genome.</title>
        <authorList>
            <person name="Carninci P."/>
            <person name="Kasukawa T."/>
            <person name="Katayama S."/>
            <person name="Gough J."/>
            <person name="Frith M.C."/>
            <person name="Maeda N."/>
            <person name="Oyama R."/>
            <person name="Ravasi T."/>
            <person name="Lenhard B."/>
            <person name="Wells C."/>
            <person name="Kodzius R."/>
            <person name="Shimokawa K."/>
            <person name="Bajic V.B."/>
            <person name="Brenner S.E."/>
            <person name="Batalov S."/>
            <person name="Forrest A.R."/>
            <person name="Zavolan M."/>
            <person name="Davis M.J."/>
            <person name="Wilming L.G."/>
            <person name="Aidinis V."/>
            <person name="Allen J.E."/>
            <person name="Ambesi-Impiombato A."/>
            <person name="Apweiler R."/>
            <person name="Aturaliya R.N."/>
            <person name="Bailey T.L."/>
            <person name="Bansal M."/>
            <person name="Baxter L."/>
            <person name="Beisel K.W."/>
            <person name="Bersano T."/>
            <person name="Bono H."/>
            <person name="Chalk A.M."/>
            <person name="Chiu K.P."/>
            <person name="Choudhary V."/>
            <person name="Christoffels A."/>
            <person name="Clutterbuck D.R."/>
            <person name="Crowe M.L."/>
            <person name="Dalla E."/>
            <person name="Dalrymple B.P."/>
            <person name="de Bono B."/>
            <person name="Della Gatta G."/>
            <person name="di Bernardo D."/>
            <person name="Down T."/>
            <person name="Engstrom P."/>
            <person name="Fagiolini M."/>
            <person name="Faulkner G."/>
            <person name="Fletcher C.F."/>
            <person name="Fukushima T."/>
            <person name="Furuno M."/>
            <person name="Futaki S."/>
            <person name="Gariboldi M."/>
            <person name="Georgii-Hemming P."/>
            <person name="Gingeras T.R."/>
            <person name="Gojobori T."/>
            <person name="Green R.E."/>
            <person name="Gustincich S."/>
            <person name="Harbers M."/>
            <person name="Hayashi Y."/>
            <person name="Hensch T.K."/>
            <person name="Hirokawa N."/>
            <person name="Hill D."/>
            <person name="Huminiecki L."/>
            <person name="Iacono M."/>
            <person name="Ikeo K."/>
            <person name="Iwama A."/>
            <person name="Ishikawa T."/>
            <person name="Jakt M."/>
            <person name="Kanapin A."/>
            <person name="Katoh M."/>
            <person name="Kawasawa Y."/>
            <person name="Kelso J."/>
            <person name="Kitamura H."/>
            <person name="Kitano H."/>
            <person name="Kollias G."/>
            <person name="Krishnan S.P."/>
            <person name="Kruger A."/>
            <person name="Kummerfeld S.K."/>
            <person name="Kurochkin I.V."/>
            <person name="Lareau L.F."/>
            <person name="Lazarevic D."/>
            <person name="Lipovich L."/>
            <person name="Liu J."/>
            <person name="Liuni S."/>
            <person name="McWilliam S."/>
            <person name="Madan Babu M."/>
            <person name="Madera M."/>
            <person name="Marchionni L."/>
            <person name="Matsuda H."/>
            <person name="Matsuzawa S."/>
            <person name="Miki H."/>
            <person name="Mignone F."/>
            <person name="Miyake S."/>
            <person name="Morris K."/>
            <person name="Mottagui-Tabar S."/>
            <person name="Mulder N."/>
            <person name="Nakano N."/>
            <person name="Nakauchi H."/>
            <person name="Ng P."/>
            <person name="Nilsson R."/>
            <person name="Nishiguchi S."/>
            <person name="Nishikawa S."/>
            <person name="Nori F."/>
            <person name="Ohara O."/>
            <person name="Okazaki Y."/>
            <person name="Orlando V."/>
            <person name="Pang K.C."/>
            <person name="Pavan W.J."/>
            <person name="Pavesi G."/>
            <person name="Pesole G."/>
            <person name="Petrovsky N."/>
            <person name="Piazza S."/>
            <person name="Reed J."/>
            <person name="Reid J.F."/>
            <person name="Ring B.Z."/>
            <person name="Ringwald M."/>
            <person name="Rost B."/>
            <person name="Ruan Y."/>
            <person name="Salzberg S.L."/>
            <person name="Sandelin A."/>
            <person name="Schneider C."/>
            <person name="Schoenbach C."/>
            <person name="Sekiguchi K."/>
            <person name="Semple C.A."/>
            <person name="Seno S."/>
            <person name="Sessa L."/>
            <person name="Sheng Y."/>
            <person name="Shibata Y."/>
            <person name="Shimada H."/>
            <person name="Shimada K."/>
            <person name="Silva D."/>
            <person name="Sinclair B."/>
            <person name="Sperling S."/>
            <person name="Stupka E."/>
            <person name="Sugiura K."/>
            <person name="Sultana R."/>
            <person name="Takenaka Y."/>
            <person name="Taki K."/>
            <person name="Tammoja K."/>
            <person name="Tan S.L."/>
            <person name="Tang S."/>
            <person name="Taylor M.S."/>
            <person name="Tegner J."/>
            <person name="Teichmann S.A."/>
            <person name="Ueda H.R."/>
            <person name="van Nimwegen E."/>
            <person name="Verardo R."/>
            <person name="Wei C.L."/>
            <person name="Yagi K."/>
            <person name="Yamanishi H."/>
            <person name="Zabarovsky E."/>
            <person name="Zhu S."/>
            <person name="Zimmer A."/>
            <person name="Hide W."/>
            <person name="Bult C."/>
            <person name="Grimmond S.M."/>
            <person name="Teasdale R.D."/>
            <person name="Liu E.T."/>
            <person name="Brusic V."/>
            <person name="Quackenbush J."/>
            <person name="Wahlestedt C."/>
            <person name="Mattick J.S."/>
            <person name="Hume D.A."/>
            <person name="Kai C."/>
            <person name="Sasaki D."/>
            <person name="Tomaru Y."/>
            <person name="Fukuda S."/>
            <person name="Kanamori-Katayama M."/>
            <person name="Suzuki M."/>
            <person name="Aoki J."/>
            <person name="Arakawa T."/>
            <person name="Iida J."/>
            <person name="Imamura K."/>
            <person name="Itoh M."/>
            <person name="Kato T."/>
            <person name="Kawaji H."/>
            <person name="Kawagashira N."/>
            <person name="Kawashima T."/>
            <person name="Kojima M."/>
            <person name="Kondo S."/>
            <person name="Konno H."/>
            <person name="Nakano K."/>
            <person name="Ninomiya N."/>
            <person name="Nishio T."/>
            <person name="Okada M."/>
            <person name="Plessy C."/>
            <person name="Shibata K."/>
            <person name="Shiraki T."/>
            <person name="Suzuki S."/>
            <person name="Tagami M."/>
            <person name="Waki K."/>
            <person name="Watahiki A."/>
            <person name="Okamura-Oho Y."/>
            <person name="Suzuki H."/>
            <person name="Kawai J."/>
            <person name="Hayashizaki Y."/>
        </authorList>
    </citation>
    <scope>NUCLEOTIDE SEQUENCE [LARGE SCALE MRNA]</scope>
    <source>
        <strain>C57BL/6J</strain>
        <tissue>Kidney</tissue>
    </source>
</reference>
<reference key="2">
    <citation type="journal article" date="2004" name="Genome Res.">
        <title>The status, quality, and expansion of the NIH full-length cDNA project: the Mammalian Gene Collection (MGC).</title>
        <authorList>
            <consortium name="The MGC Project Team"/>
        </authorList>
    </citation>
    <scope>NUCLEOTIDE SEQUENCE [LARGE SCALE MRNA]</scope>
    <source>
        <strain>Czech II</strain>
    </source>
</reference>
<reference key="3">
    <citation type="journal article" date="2010" name="Cell">
        <title>A tissue-specific atlas of mouse protein phosphorylation and expression.</title>
        <authorList>
            <person name="Huttlin E.L."/>
            <person name="Jedrychowski M.P."/>
            <person name="Elias J.E."/>
            <person name="Goswami T."/>
            <person name="Rad R."/>
            <person name="Beausoleil S.A."/>
            <person name="Villen J."/>
            <person name="Haas W."/>
            <person name="Sowa M.E."/>
            <person name="Gygi S.P."/>
        </authorList>
    </citation>
    <scope>IDENTIFICATION BY MASS SPECTROMETRY [LARGE SCALE ANALYSIS]</scope>
    <source>
        <tissue>Kidney</tissue>
    </source>
</reference>
<keyword id="KW-1003">Cell membrane</keyword>
<keyword id="KW-1015">Disulfide bond</keyword>
<keyword id="KW-0325">Glycoprotein</keyword>
<keyword id="KW-0456">Lyase</keyword>
<keyword id="KW-0472">Membrane</keyword>
<keyword id="KW-0479">Metal-binding</keyword>
<keyword id="KW-1185">Reference proteome</keyword>
<keyword id="KW-0732">Signal</keyword>
<keyword id="KW-0812">Transmembrane</keyword>
<keyword id="KW-1133">Transmembrane helix</keyword>
<keyword id="KW-0862">Zinc</keyword>
<evidence type="ECO:0000250" key="1">
    <source>
        <dbReference type="UniProtKB" id="O43570"/>
    </source>
</evidence>
<evidence type="ECO:0000250" key="2">
    <source>
        <dbReference type="UniProtKB" id="P00918"/>
    </source>
</evidence>
<evidence type="ECO:0000255" key="3"/>
<evidence type="ECO:0000255" key="4">
    <source>
        <dbReference type="PROSITE-ProRule" id="PRU01134"/>
    </source>
</evidence>
<evidence type="ECO:0000305" key="5"/>
<evidence type="ECO:0000312" key="6">
    <source>
        <dbReference type="MGI" id="MGI:1923709"/>
    </source>
</evidence>
<gene>
    <name evidence="6" type="primary">Ca12</name>
    <name type="synonym">Car12</name>
</gene>
<comment type="function">
    <text evidence="1">Reversible hydration of carbon dioxide.</text>
</comment>
<comment type="catalytic activity">
    <reaction evidence="1">
        <text>hydrogencarbonate + H(+) = CO2 + H2O</text>
        <dbReference type="Rhea" id="RHEA:10748"/>
        <dbReference type="ChEBI" id="CHEBI:15377"/>
        <dbReference type="ChEBI" id="CHEBI:15378"/>
        <dbReference type="ChEBI" id="CHEBI:16526"/>
        <dbReference type="ChEBI" id="CHEBI:17544"/>
        <dbReference type="EC" id="4.2.1.1"/>
    </reaction>
</comment>
<comment type="cofactor">
    <cofactor evidence="1">
        <name>Zn(2+)</name>
        <dbReference type="ChEBI" id="CHEBI:29105"/>
    </cofactor>
</comment>
<comment type="activity regulation">
    <text evidence="1">Inhibited by acetazolamide.</text>
</comment>
<comment type="subunit">
    <text evidence="1">Homodimer.</text>
</comment>
<comment type="subcellular location">
    <subcellularLocation>
        <location evidence="1">Membrane</location>
        <topology evidence="1">Single-pass type I membrane protein</topology>
    </subcellularLocation>
    <subcellularLocation>
        <location evidence="1">Cell membrane</location>
    </subcellularLocation>
</comment>
<comment type="similarity">
    <text evidence="5">Belongs to the alpha-carbonic anhydrase family.</text>
</comment>
<proteinExistence type="evidence at protein level"/>
<organism>
    <name type="scientific">Mus musculus</name>
    <name type="common">Mouse</name>
    <dbReference type="NCBI Taxonomy" id="10090"/>
    <lineage>
        <taxon>Eukaryota</taxon>
        <taxon>Metazoa</taxon>
        <taxon>Chordata</taxon>
        <taxon>Craniata</taxon>
        <taxon>Vertebrata</taxon>
        <taxon>Euteleostomi</taxon>
        <taxon>Mammalia</taxon>
        <taxon>Eutheria</taxon>
        <taxon>Euarchontoglires</taxon>
        <taxon>Glires</taxon>
        <taxon>Rodentia</taxon>
        <taxon>Myomorpha</taxon>
        <taxon>Muroidea</taxon>
        <taxon>Muridae</taxon>
        <taxon>Murinae</taxon>
        <taxon>Mus</taxon>
        <taxon>Mus</taxon>
    </lineage>
</organism>
<feature type="signal peptide" evidence="3">
    <location>
        <begin position="1"/>
        <end position="24"/>
    </location>
</feature>
<feature type="chain" id="PRO_0000004249" description="Carbonic anhydrase 12">
    <location>
        <begin position="25"/>
        <end position="354"/>
    </location>
</feature>
<feature type="topological domain" description="Extracellular" evidence="3">
    <location>
        <begin position="25"/>
        <end position="301"/>
    </location>
</feature>
<feature type="transmembrane region" description="Helical" evidence="3">
    <location>
        <begin position="302"/>
        <end position="322"/>
    </location>
</feature>
<feature type="topological domain" description="Cytoplasmic" evidence="3">
    <location>
        <begin position="323"/>
        <end position="354"/>
    </location>
</feature>
<feature type="domain" description="Alpha-carbonic anhydrase" evidence="4">
    <location>
        <begin position="30"/>
        <end position="290"/>
    </location>
</feature>
<feature type="active site" description="Proton donor/acceptor" evidence="2">
    <location>
        <position position="94"/>
    </location>
</feature>
<feature type="binding site" evidence="1">
    <location>
        <position position="120"/>
    </location>
    <ligand>
        <name>Zn(2+)</name>
        <dbReference type="ChEBI" id="CHEBI:29105"/>
        <note>catalytic</note>
    </ligand>
</feature>
<feature type="binding site" evidence="1">
    <location>
        <position position="122"/>
    </location>
    <ligand>
        <name>Zn(2+)</name>
        <dbReference type="ChEBI" id="CHEBI:29105"/>
        <note>catalytic</note>
    </ligand>
</feature>
<feature type="binding site" evidence="1">
    <location>
        <position position="146"/>
    </location>
    <ligand>
        <name>Zn(2+)</name>
        <dbReference type="ChEBI" id="CHEBI:29105"/>
        <note>catalytic</note>
    </ligand>
</feature>
<feature type="binding site" evidence="2">
    <location>
        <begin position="227"/>
        <end position="228"/>
    </location>
    <ligand>
        <name>substrate</name>
    </ligand>
</feature>
<feature type="glycosylation site" description="N-linked (GlcNAc...) asparagine" evidence="3">
    <location>
        <position position="28"/>
    </location>
</feature>
<feature type="glycosylation site" description="N-linked (GlcNAc...) asparagine" evidence="3">
    <location>
        <position position="42"/>
    </location>
</feature>
<feature type="glycosylation site" description="N-linked (GlcNAc...) asparagine" evidence="3">
    <location>
        <position position="80"/>
    </location>
</feature>
<feature type="glycosylation site" description="N-linked (GlcNAc...) asparagine" evidence="3">
    <location>
        <position position="88"/>
    </location>
</feature>
<feature type="disulfide bond" evidence="1">
    <location>
        <begin position="50"/>
        <end position="231"/>
    </location>
</feature>
<feature type="sequence conflict" description="In Ref. 1; BAC35074." evidence="5" ref="1">
    <original>D</original>
    <variation>N</variation>
    <location>
        <position position="297"/>
    </location>
</feature>
<protein>
    <recommendedName>
        <fullName evidence="5">Carbonic anhydrase 12</fullName>
        <ecNumber evidence="1">4.2.1.1</ecNumber>
    </recommendedName>
    <alternativeName>
        <fullName>Carbonate dehydratase XII</fullName>
    </alternativeName>
    <alternativeName>
        <fullName>Carbonic anhydrase XII</fullName>
        <shortName>CA-XII</shortName>
    </alternativeName>
</protein>
<name>CAH12_MOUSE</name>